<reference key="1">
    <citation type="journal article" date="2008" name="Environ. Microbiol.">
        <title>The genome of Erwinia tasmaniensis strain Et1/99, a non-pathogenic bacterium in the genus Erwinia.</title>
        <authorList>
            <person name="Kube M."/>
            <person name="Migdoll A.M."/>
            <person name="Mueller I."/>
            <person name="Kuhl H."/>
            <person name="Beck A."/>
            <person name="Reinhardt R."/>
            <person name="Geider K."/>
        </authorList>
    </citation>
    <scope>NUCLEOTIDE SEQUENCE [LARGE SCALE GENOMIC DNA]</scope>
    <source>
        <strain>DSM 17950 / CFBP 7177 / CIP 109463 / NCPPB 4357 / Et1/99</strain>
    </source>
</reference>
<protein>
    <recommendedName>
        <fullName evidence="1">DnaA initiator-associating protein DiaA</fullName>
    </recommendedName>
</protein>
<organism>
    <name type="scientific">Erwinia tasmaniensis (strain DSM 17950 / CFBP 7177 / CIP 109463 / NCPPB 4357 / Et1/99)</name>
    <dbReference type="NCBI Taxonomy" id="465817"/>
    <lineage>
        <taxon>Bacteria</taxon>
        <taxon>Pseudomonadati</taxon>
        <taxon>Pseudomonadota</taxon>
        <taxon>Gammaproteobacteria</taxon>
        <taxon>Enterobacterales</taxon>
        <taxon>Erwiniaceae</taxon>
        <taxon>Erwinia</taxon>
    </lineage>
</organism>
<sequence>MLERIKVCFTESIQTQIAAAEALPDAISRAALTVVQSLLNGNKILSCGNGTSSANAQHFAASMINRFETERPSLPAIALSADNVLLTAIGNDRLHEEIYAKQVRALGHTGDILLAISTRGNSRDIVKAVEAAVTRDMTIVALTGHDGGELAGLLGPQDVEIRIPSHRSARIQEMHMLTVNCLCDLIDNTLFPHQEV</sequence>
<proteinExistence type="inferred from homology"/>
<dbReference type="EMBL" id="CU468135">
    <property type="protein sequence ID" value="CAO97968.1"/>
    <property type="molecule type" value="Genomic_DNA"/>
</dbReference>
<dbReference type="RefSeq" id="WP_012442622.1">
    <property type="nucleotide sequence ID" value="NC_010694.1"/>
</dbReference>
<dbReference type="SMR" id="B2VCZ2"/>
<dbReference type="STRING" id="465817.ETA_29220"/>
<dbReference type="KEGG" id="eta:ETA_29220"/>
<dbReference type="eggNOG" id="COG0279">
    <property type="taxonomic scope" value="Bacteria"/>
</dbReference>
<dbReference type="HOGENOM" id="CLU_080999_3_1_6"/>
<dbReference type="OrthoDB" id="9810929at2"/>
<dbReference type="Proteomes" id="UP000001726">
    <property type="component" value="Chromosome"/>
</dbReference>
<dbReference type="GO" id="GO:0097367">
    <property type="term" value="F:carbohydrate derivative binding"/>
    <property type="evidence" value="ECO:0007669"/>
    <property type="project" value="InterPro"/>
</dbReference>
<dbReference type="GO" id="GO:1901135">
    <property type="term" value="P:carbohydrate derivative metabolic process"/>
    <property type="evidence" value="ECO:0007669"/>
    <property type="project" value="InterPro"/>
</dbReference>
<dbReference type="GO" id="GO:0006260">
    <property type="term" value="P:DNA replication"/>
    <property type="evidence" value="ECO:0007669"/>
    <property type="project" value="UniProtKB-UniRule"/>
</dbReference>
<dbReference type="CDD" id="cd05006">
    <property type="entry name" value="SIS_GmhA"/>
    <property type="match status" value="1"/>
</dbReference>
<dbReference type="FunFam" id="3.40.50.10490:FF:000006">
    <property type="entry name" value="DnaA initiator-associating protein DiaA"/>
    <property type="match status" value="1"/>
</dbReference>
<dbReference type="Gene3D" id="3.40.50.10490">
    <property type="entry name" value="Glucose-6-phosphate isomerase like protein, domain 1"/>
    <property type="match status" value="1"/>
</dbReference>
<dbReference type="HAMAP" id="MF_01157">
    <property type="entry name" value="SIS_DiaA"/>
    <property type="match status" value="1"/>
</dbReference>
<dbReference type="InterPro" id="IPR023070">
    <property type="entry name" value="DiaA"/>
</dbReference>
<dbReference type="InterPro" id="IPR035461">
    <property type="entry name" value="GmhA/DiaA"/>
</dbReference>
<dbReference type="InterPro" id="IPR001347">
    <property type="entry name" value="SIS_dom"/>
</dbReference>
<dbReference type="InterPro" id="IPR046348">
    <property type="entry name" value="SIS_dom_sf"/>
</dbReference>
<dbReference type="InterPro" id="IPR050099">
    <property type="entry name" value="SIS_GmhA/DiaA_subfam"/>
</dbReference>
<dbReference type="NCBIfam" id="NF008138">
    <property type="entry name" value="PRK10886.1"/>
    <property type="match status" value="1"/>
</dbReference>
<dbReference type="PANTHER" id="PTHR30390:SF6">
    <property type="entry name" value="DNAA INITIATOR-ASSOCIATING PROTEIN DIAA"/>
    <property type="match status" value="1"/>
</dbReference>
<dbReference type="PANTHER" id="PTHR30390">
    <property type="entry name" value="SEDOHEPTULOSE 7-PHOSPHATE ISOMERASE / DNAA INITIATOR-ASSOCIATING FACTOR FOR REPLICATION INITIATION"/>
    <property type="match status" value="1"/>
</dbReference>
<dbReference type="Pfam" id="PF13580">
    <property type="entry name" value="SIS_2"/>
    <property type="match status" value="1"/>
</dbReference>
<dbReference type="SUPFAM" id="SSF53697">
    <property type="entry name" value="SIS domain"/>
    <property type="match status" value="1"/>
</dbReference>
<dbReference type="PROSITE" id="PS51464">
    <property type="entry name" value="SIS"/>
    <property type="match status" value="1"/>
</dbReference>
<comment type="function">
    <text evidence="1">Required for the timely initiation of chromosomal replication via direct interactions with the DnaA initiator protein.</text>
</comment>
<comment type="subunit">
    <text evidence="1">Homotetramer; dimer of dimers.</text>
</comment>
<comment type="similarity">
    <text evidence="1">Belongs to the SIS family. DiaA subfamily.</text>
</comment>
<name>DIAA_ERWT9</name>
<evidence type="ECO:0000255" key="1">
    <source>
        <dbReference type="HAMAP-Rule" id="MF_01157"/>
    </source>
</evidence>
<keyword id="KW-0235">DNA replication</keyword>
<keyword id="KW-1185">Reference proteome</keyword>
<accession>B2VCZ2</accession>
<gene>
    <name evidence="1" type="primary">diaA</name>
    <name type="ordered locus">ETA_29220</name>
</gene>
<feature type="chain" id="PRO_1000137792" description="DnaA initiator-associating protein DiaA">
    <location>
        <begin position="1"/>
        <end position="196"/>
    </location>
</feature>
<feature type="domain" description="SIS" evidence="1">
    <location>
        <begin position="34"/>
        <end position="196"/>
    </location>
</feature>